<reference key="1">
    <citation type="journal article" date="2008" name="J. Bacteriol.">
        <title>Insights into the environmental resistance gene pool from the genome sequence of the multidrug-resistant environmental isolate Escherichia coli SMS-3-5.</title>
        <authorList>
            <person name="Fricke W.F."/>
            <person name="Wright M.S."/>
            <person name="Lindell A.H."/>
            <person name="Harkins D.M."/>
            <person name="Baker-Austin C."/>
            <person name="Ravel J."/>
            <person name="Stepanauskas R."/>
        </authorList>
    </citation>
    <scope>NUCLEOTIDE SEQUENCE [LARGE SCALE GENOMIC DNA]</scope>
    <source>
        <strain>SMS-3-5 / SECEC</strain>
    </source>
</reference>
<protein>
    <recommendedName>
        <fullName evidence="1">Small heat shock protein IbpA</fullName>
    </recommendedName>
    <alternativeName>
        <fullName evidence="1">16 kDa heat shock protein A</fullName>
    </alternativeName>
</protein>
<gene>
    <name evidence="1" type="primary">ibpA</name>
    <name type="ordered locus">EcSMS35_4052</name>
</gene>
<proteinExistence type="inferred from homology"/>
<name>IBPA_ECOSM</name>
<keyword id="KW-0143">Chaperone</keyword>
<keyword id="KW-0963">Cytoplasm</keyword>
<keyword id="KW-0346">Stress response</keyword>
<accession>B1LL12</accession>
<feature type="chain" id="PRO_1000189086" description="Small heat shock protein IbpA">
    <location>
        <begin position="1"/>
        <end position="137"/>
    </location>
</feature>
<feature type="domain" description="sHSP" evidence="2">
    <location>
        <begin position="28"/>
        <end position="137"/>
    </location>
</feature>
<dbReference type="EMBL" id="CP000970">
    <property type="protein sequence ID" value="ACB16214.1"/>
    <property type="molecule type" value="Genomic_DNA"/>
</dbReference>
<dbReference type="RefSeq" id="WP_001243437.1">
    <property type="nucleotide sequence ID" value="NC_010498.1"/>
</dbReference>
<dbReference type="SMR" id="B1LL12"/>
<dbReference type="GeneID" id="93778428"/>
<dbReference type="KEGG" id="ecm:EcSMS35_4052"/>
<dbReference type="HOGENOM" id="CLU_046737_4_2_6"/>
<dbReference type="Proteomes" id="UP000007011">
    <property type="component" value="Chromosome"/>
</dbReference>
<dbReference type="GO" id="GO:0005737">
    <property type="term" value="C:cytoplasm"/>
    <property type="evidence" value="ECO:0007669"/>
    <property type="project" value="UniProtKB-SubCell"/>
</dbReference>
<dbReference type="GO" id="GO:0050821">
    <property type="term" value="P:protein stabilization"/>
    <property type="evidence" value="ECO:0007669"/>
    <property type="project" value="UniProtKB-UniRule"/>
</dbReference>
<dbReference type="CDD" id="cd06470">
    <property type="entry name" value="ACD_IbpA-B_like"/>
    <property type="match status" value="1"/>
</dbReference>
<dbReference type="FunFam" id="2.60.40.790:FF:000002">
    <property type="entry name" value="Small heat shock protein IbpA"/>
    <property type="match status" value="1"/>
</dbReference>
<dbReference type="Gene3D" id="2.60.40.790">
    <property type="match status" value="1"/>
</dbReference>
<dbReference type="HAMAP" id="MF_02000">
    <property type="entry name" value="HSP20_IbpA"/>
    <property type="match status" value="1"/>
</dbReference>
<dbReference type="InterPro" id="IPR002068">
    <property type="entry name" value="A-crystallin/Hsp20_dom"/>
</dbReference>
<dbReference type="InterPro" id="IPR037913">
    <property type="entry name" value="ACD_IbpA/B"/>
</dbReference>
<dbReference type="InterPro" id="IPR008978">
    <property type="entry name" value="HSP20-like_chaperone"/>
</dbReference>
<dbReference type="InterPro" id="IPR023728">
    <property type="entry name" value="HSP20_IbpA"/>
</dbReference>
<dbReference type="NCBIfam" id="NF008013">
    <property type="entry name" value="PRK10743.1"/>
    <property type="match status" value="1"/>
</dbReference>
<dbReference type="PANTHER" id="PTHR47062">
    <property type="match status" value="1"/>
</dbReference>
<dbReference type="PANTHER" id="PTHR47062:SF1">
    <property type="entry name" value="SMALL HEAT SHOCK PROTEIN IBPA"/>
    <property type="match status" value="1"/>
</dbReference>
<dbReference type="Pfam" id="PF00011">
    <property type="entry name" value="HSP20"/>
    <property type="match status" value="1"/>
</dbReference>
<dbReference type="SUPFAM" id="SSF49764">
    <property type="entry name" value="HSP20-like chaperones"/>
    <property type="match status" value="1"/>
</dbReference>
<dbReference type="PROSITE" id="PS01031">
    <property type="entry name" value="SHSP"/>
    <property type="match status" value="1"/>
</dbReference>
<sequence>MRNFDLSPLYRSAIGFDRLFNHLENNQSQSNGGYPPYNVELVDENHYRIAIAVAGFAESELEITAQDNLLVVKGAHADEQKERTYLYQGIAERNFERKFQLAENIHVRGANLVNGLLYIDLERVIPEAKKPRRIEIN</sequence>
<comment type="function">
    <text evidence="1">Associates with aggregated proteins, together with IbpB, to stabilize and protect them from irreversible denaturation and extensive proteolysis during heat shock and oxidative stress. Aggregated proteins bound to the IbpAB complex are more efficiently refolded and reactivated by the ATP-dependent chaperone systems ClpB and DnaK/DnaJ/GrpE. Its activity is ATP-independent.</text>
</comment>
<comment type="subunit">
    <text evidence="1">Monomer. Forms homomultimers of about 100-150 subunits at optimal growth temperatures. Conformation changes to monomers at high temperatures or high ionic concentrations.</text>
</comment>
<comment type="subcellular location">
    <subcellularLocation>
        <location evidence="1">Cytoplasm</location>
    </subcellularLocation>
</comment>
<comment type="similarity">
    <text evidence="1 2">Belongs to the small heat shock protein (HSP20) family.</text>
</comment>
<organism>
    <name type="scientific">Escherichia coli (strain SMS-3-5 / SECEC)</name>
    <dbReference type="NCBI Taxonomy" id="439855"/>
    <lineage>
        <taxon>Bacteria</taxon>
        <taxon>Pseudomonadati</taxon>
        <taxon>Pseudomonadota</taxon>
        <taxon>Gammaproteobacteria</taxon>
        <taxon>Enterobacterales</taxon>
        <taxon>Enterobacteriaceae</taxon>
        <taxon>Escherichia</taxon>
    </lineage>
</organism>
<evidence type="ECO:0000255" key="1">
    <source>
        <dbReference type="HAMAP-Rule" id="MF_02000"/>
    </source>
</evidence>
<evidence type="ECO:0000255" key="2">
    <source>
        <dbReference type="PROSITE-ProRule" id="PRU00285"/>
    </source>
</evidence>